<feature type="chain" id="PRO_0000233060" description="BET1-like protein">
    <location>
        <begin position="1"/>
        <end position="110"/>
    </location>
</feature>
<feature type="topological domain" description="Cytoplasmic" evidence="3">
    <location>
        <begin position="1"/>
        <end position="85"/>
    </location>
</feature>
<feature type="transmembrane region" description="Helical; Anchor for type IV membrane protein" evidence="3">
    <location>
        <begin position="86"/>
        <end position="106"/>
    </location>
</feature>
<feature type="topological domain" description="Lumenal" evidence="3">
    <location>
        <begin position="107"/>
        <end position="110"/>
    </location>
</feature>
<feature type="domain" description="t-SNARE coiled-coil homology" evidence="4">
    <location>
        <begin position="14"/>
        <end position="76"/>
    </location>
</feature>
<keyword id="KW-0175">Coiled coil</keyword>
<keyword id="KW-0333">Golgi apparatus</keyword>
<keyword id="KW-0472">Membrane</keyword>
<keyword id="KW-0653">Protein transport</keyword>
<keyword id="KW-1185">Reference proteome</keyword>
<keyword id="KW-0812">Transmembrane</keyword>
<keyword id="KW-1133">Transmembrane helix</keyword>
<keyword id="KW-0813">Transport</keyword>
<reference evidence="5" key="1">
    <citation type="submission" date="2004-08" db="EMBL/GenBank/DDBJ databases">
        <authorList>
            <consortium name="NIH - Zebrafish Gene Collection (ZGC) project"/>
        </authorList>
    </citation>
    <scope>NUCLEOTIDE SEQUENCE [LARGE SCALE MRNA]</scope>
    <source>
        <tissue evidence="5">Embryo</tissue>
    </source>
</reference>
<accession>Q68EL3</accession>
<comment type="function">
    <text evidence="2">Vesicle SNARE required for targeting and fusion of retrograde transport vesicles with the Golgi complex. Required for the integrity of the Golgi complex (By similarity).</text>
</comment>
<comment type="subunit">
    <text evidence="1">Component of a SNARE complex consisting of stx5, ykt6, gosr2 and bet1l.</text>
</comment>
<comment type="subcellular location">
    <subcellularLocation>
        <location evidence="1">Golgi apparatus membrane</location>
        <topology evidence="1">Single-pass type IV membrane protein</topology>
    </subcellularLocation>
</comment>
<name>BET1L_DANRE</name>
<proteinExistence type="inferred from homology"/>
<gene>
    <name type="primary">bet1l</name>
    <name type="ORF">zgc:100789</name>
</gene>
<protein>
    <recommendedName>
        <fullName>BET1-like protein</fullName>
    </recommendedName>
</protein>
<organism>
    <name type="scientific">Danio rerio</name>
    <name type="common">Zebrafish</name>
    <name type="synonym">Brachydanio rerio</name>
    <dbReference type="NCBI Taxonomy" id="7955"/>
    <lineage>
        <taxon>Eukaryota</taxon>
        <taxon>Metazoa</taxon>
        <taxon>Chordata</taxon>
        <taxon>Craniata</taxon>
        <taxon>Vertebrata</taxon>
        <taxon>Euteleostomi</taxon>
        <taxon>Actinopterygii</taxon>
        <taxon>Neopterygii</taxon>
        <taxon>Teleostei</taxon>
        <taxon>Ostariophysi</taxon>
        <taxon>Cypriniformes</taxon>
        <taxon>Danionidae</taxon>
        <taxon>Danioninae</taxon>
        <taxon>Danio</taxon>
    </lineage>
</organism>
<sequence>MADPWNRGHGAVDDMLDAENKRMAENLASKVSRLKSLAYDIDKDAEEQNAYLDGMDSNFLSATGLLTGSVKRFSTMVRSGRDNRKILCYVSVGLVVAFFLLYYLVSRMQN</sequence>
<dbReference type="EMBL" id="BC080213">
    <property type="protein sequence ID" value="AAH80213.1"/>
    <property type="molecule type" value="mRNA"/>
</dbReference>
<dbReference type="RefSeq" id="NP_001003998.1">
    <property type="nucleotide sequence ID" value="NM_001003998.2"/>
</dbReference>
<dbReference type="RefSeq" id="XP_009296054.1">
    <property type="nucleotide sequence ID" value="XM_009297779.2"/>
</dbReference>
<dbReference type="SMR" id="Q68EL3"/>
<dbReference type="FunCoup" id="Q68EL3">
    <property type="interactions" value="380"/>
</dbReference>
<dbReference type="Ensembl" id="ENSDART00000142794">
    <property type="protein sequence ID" value="ENSDARP00000113973"/>
    <property type="gene ID" value="ENSDARG00000032037"/>
</dbReference>
<dbReference type="GeneID" id="445493"/>
<dbReference type="KEGG" id="dre:445493"/>
<dbReference type="AGR" id="ZFIN:ZDB-GENE-040822-2"/>
<dbReference type="CTD" id="51272"/>
<dbReference type="ZFIN" id="ZDB-GENE-040822-2">
    <property type="gene designation" value="bet1l"/>
</dbReference>
<dbReference type="InParanoid" id="Q68EL3"/>
<dbReference type="OMA" id="RLMCYLI"/>
<dbReference type="OrthoDB" id="261831at2759"/>
<dbReference type="PhylomeDB" id="Q68EL3"/>
<dbReference type="TreeFam" id="TF323307"/>
<dbReference type="Reactome" id="R-DRE-6811438">
    <property type="pathway name" value="Intra-Golgi traffic"/>
</dbReference>
<dbReference type="PRO" id="PR:Q68EL3"/>
<dbReference type="Proteomes" id="UP000000437">
    <property type="component" value="Chromosome 25"/>
</dbReference>
<dbReference type="Bgee" id="ENSDARG00000032037">
    <property type="expression patterns" value="Expressed in swim bladder and 21 other cell types or tissues"/>
</dbReference>
<dbReference type="ExpressionAtlas" id="Q68EL3">
    <property type="expression patterns" value="baseline"/>
</dbReference>
<dbReference type="GO" id="GO:0005829">
    <property type="term" value="C:cytosol"/>
    <property type="evidence" value="ECO:0007669"/>
    <property type="project" value="GOC"/>
</dbReference>
<dbReference type="GO" id="GO:0000139">
    <property type="term" value="C:Golgi membrane"/>
    <property type="evidence" value="ECO:0007669"/>
    <property type="project" value="UniProtKB-SubCell"/>
</dbReference>
<dbReference type="GO" id="GO:0031201">
    <property type="term" value="C:SNARE complex"/>
    <property type="evidence" value="ECO:0000318"/>
    <property type="project" value="GO_Central"/>
</dbReference>
<dbReference type="GO" id="GO:0005484">
    <property type="term" value="F:SNAP receptor activity"/>
    <property type="evidence" value="ECO:0000318"/>
    <property type="project" value="GO_Central"/>
</dbReference>
<dbReference type="GO" id="GO:0015031">
    <property type="term" value="P:protein transport"/>
    <property type="evidence" value="ECO:0007669"/>
    <property type="project" value="UniProtKB-KW"/>
</dbReference>
<dbReference type="GO" id="GO:2000156">
    <property type="term" value="P:regulation of retrograde vesicle-mediated transport, Golgi to ER"/>
    <property type="evidence" value="ECO:0000318"/>
    <property type="project" value="GO_Central"/>
</dbReference>
<dbReference type="GO" id="GO:0042147">
    <property type="term" value="P:retrograde transport, endosome to Golgi"/>
    <property type="evidence" value="ECO:0000318"/>
    <property type="project" value="GO_Central"/>
</dbReference>
<dbReference type="CDD" id="cd15853">
    <property type="entry name" value="SNARE_Bet1"/>
    <property type="match status" value="1"/>
</dbReference>
<dbReference type="FunFam" id="1.20.5.110:FF:000038">
    <property type="entry name" value="BET1-like protein isoform X2"/>
    <property type="match status" value="1"/>
</dbReference>
<dbReference type="Gene3D" id="1.20.5.110">
    <property type="match status" value="1"/>
</dbReference>
<dbReference type="InterPro" id="IPR039899">
    <property type="entry name" value="BET1_SNARE"/>
</dbReference>
<dbReference type="InterPro" id="IPR000727">
    <property type="entry name" value="T_SNARE_dom"/>
</dbReference>
<dbReference type="PANTHER" id="PTHR12791">
    <property type="entry name" value="GOLGI SNARE BET1-RELATED"/>
    <property type="match status" value="1"/>
</dbReference>
<dbReference type="SUPFAM" id="SSF58038">
    <property type="entry name" value="SNARE fusion complex"/>
    <property type="match status" value="1"/>
</dbReference>
<dbReference type="PROSITE" id="PS50192">
    <property type="entry name" value="T_SNARE"/>
    <property type="match status" value="1"/>
</dbReference>
<evidence type="ECO:0000250" key="1"/>
<evidence type="ECO:0000250" key="2">
    <source>
        <dbReference type="UniProtKB" id="O35152"/>
    </source>
</evidence>
<evidence type="ECO:0000255" key="3"/>
<evidence type="ECO:0000255" key="4">
    <source>
        <dbReference type="PROSITE-ProRule" id="PRU00202"/>
    </source>
</evidence>
<evidence type="ECO:0000312" key="5">
    <source>
        <dbReference type="EMBL" id="AAH80213.1"/>
    </source>
</evidence>